<protein>
    <recommendedName>
        <fullName>Uncharacterized protein YvbI</fullName>
    </recommendedName>
</protein>
<comment type="subcellular location">
    <subcellularLocation>
        <location evidence="2">Cell membrane</location>
        <topology evidence="2">Multi-pass membrane protein</topology>
    </subcellularLocation>
</comment>
<organism>
    <name type="scientific">Bacillus subtilis (strain 168)</name>
    <dbReference type="NCBI Taxonomy" id="224308"/>
    <lineage>
        <taxon>Bacteria</taxon>
        <taxon>Bacillati</taxon>
        <taxon>Bacillota</taxon>
        <taxon>Bacilli</taxon>
        <taxon>Bacillales</taxon>
        <taxon>Bacillaceae</taxon>
        <taxon>Bacillus</taxon>
    </lineage>
</organism>
<sequence length="232" mass="25753">MYCPQCGHQTDGGNFCEKCGSPLPGQSGHQHAAQTGAAAKQAAKQFGSFVLSVLKRPYQECKATGGEQLISAIITMVLFSLLTPLMFYILFSDGPGSVSFTAIFLEPTIYFILFLFGLHACIFFALKIAGNQVSFKDSFSRFGAFLIPFTAILILALFFFLLHTDICFTILAVGLIGAFFAIPPAMLSSYQHSYKGKVDFIYSTIVIYLIICVTFQLIIEHYVKEIFRYMLF</sequence>
<dbReference type="EMBL" id="AL009126">
    <property type="protein sequence ID" value="CAB15392.1"/>
    <property type="molecule type" value="Genomic_DNA"/>
</dbReference>
<dbReference type="PIR" id="H70029">
    <property type="entry name" value="H70029"/>
</dbReference>
<dbReference type="RefSeq" id="NP_391267.1">
    <property type="nucleotide sequence ID" value="NC_000964.3"/>
</dbReference>
<dbReference type="RefSeq" id="WP_003228340.1">
    <property type="nucleotide sequence ID" value="NZ_OZ025638.1"/>
</dbReference>
<dbReference type="FunCoup" id="O32246">
    <property type="interactions" value="58"/>
</dbReference>
<dbReference type="STRING" id="224308.BSU33870"/>
<dbReference type="PaxDb" id="224308-BSU33870"/>
<dbReference type="EnsemblBacteria" id="CAB15392">
    <property type="protein sequence ID" value="CAB15392"/>
    <property type="gene ID" value="BSU_33870"/>
</dbReference>
<dbReference type="GeneID" id="938638"/>
<dbReference type="KEGG" id="bsu:BSU33870"/>
<dbReference type="PATRIC" id="fig|224308.179.peg.3672"/>
<dbReference type="eggNOG" id="COG3064">
    <property type="taxonomic scope" value="Bacteria"/>
</dbReference>
<dbReference type="InParanoid" id="O32246"/>
<dbReference type="OrthoDB" id="2448863at2"/>
<dbReference type="BioCyc" id="BSUB:BSU33870-MONOMER"/>
<dbReference type="Proteomes" id="UP000001570">
    <property type="component" value="Chromosome"/>
</dbReference>
<dbReference type="GO" id="GO:0005886">
    <property type="term" value="C:plasma membrane"/>
    <property type="evidence" value="ECO:0007669"/>
    <property type="project" value="UniProtKB-SubCell"/>
</dbReference>
<keyword id="KW-1003">Cell membrane</keyword>
<keyword id="KW-0472">Membrane</keyword>
<keyword id="KW-1185">Reference proteome</keyword>
<keyword id="KW-0812">Transmembrane</keyword>
<keyword id="KW-1133">Transmembrane helix</keyword>
<accession>O32246</accession>
<gene>
    <name type="primary">yvbI</name>
    <name type="ordered locus">BSU33870</name>
</gene>
<feature type="chain" id="PRO_0000049938" description="Uncharacterized protein YvbI">
    <location>
        <begin position="1"/>
        <end position="232"/>
    </location>
</feature>
<feature type="transmembrane region" description="Helical" evidence="1">
    <location>
        <begin position="69"/>
        <end position="91"/>
    </location>
</feature>
<feature type="transmembrane region" description="Helical" evidence="1">
    <location>
        <begin position="104"/>
        <end position="126"/>
    </location>
</feature>
<feature type="transmembrane region" description="Helical" evidence="1">
    <location>
        <begin position="139"/>
        <end position="161"/>
    </location>
</feature>
<feature type="transmembrane region" description="Helical" evidence="1">
    <location>
        <begin position="166"/>
        <end position="188"/>
    </location>
</feature>
<feature type="transmembrane region" description="Helical" evidence="1">
    <location>
        <begin position="200"/>
        <end position="219"/>
    </location>
</feature>
<proteinExistence type="predicted"/>
<evidence type="ECO:0000255" key="1"/>
<evidence type="ECO:0000305" key="2"/>
<reference key="1">
    <citation type="journal article" date="1997" name="Nature">
        <title>The complete genome sequence of the Gram-positive bacterium Bacillus subtilis.</title>
        <authorList>
            <person name="Kunst F."/>
            <person name="Ogasawara N."/>
            <person name="Moszer I."/>
            <person name="Albertini A.M."/>
            <person name="Alloni G."/>
            <person name="Azevedo V."/>
            <person name="Bertero M.G."/>
            <person name="Bessieres P."/>
            <person name="Bolotin A."/>
            <person name="Borchert S."/>
            <person name="Borriss R."/>
            <person name="Boursier L."/>
            <person name="Brans A."/>
            <person name="Braun M."/>
            <person name="Brignell S.C."/>
            <person name="Bron S."/>
            <person name="Brouillet S."/>
            <person name="Bruschi C.V."/>
            <person name="Caldwell B."/>
            <person name="Capuano V."/>
            <person name="Carter N.M."/>
            <person name="Choi S.-K."/>
            <person name="Codani J.-J."/>
            <person name="Connerton I.F."/>
            <person name="Cummings N.J."/>
            <person name="Daniel R.A."/>
            <person name="Denizot F."/>
            <person name="Devine K.M."/>
            <person name="Duesterhoeft A."/>
            <person name="Ehrlich S.D."/>
            <person name="Emmerson P.T."/>
            <person name="Entian K.-D."/>
            <person name="Errington J."/>
            <person name="Fabret C."/>
            <person name="Ferrari E."/>
            <person name="Foulger D."/>
            <person name="Fritz C."/>
            <person name="Fujita M."/>
            <person name="Fujita Y."/>
            <person name="Fuma S."/>
            <person name="Galizzi A."/>
            <person name="Galleron N."/>
            <person name="Ghim S.-Y."/>
            <person name="Glaser P."/>
            <person name="Goffeau A."/>
            <person name="Golightly E.J."/>
            <person name="Grandi G."/>
            <person name="Guiseppi G."/>
            <person name="Guy B.J."/>
            <person name="Haga K."/>
            <person name="Haiech J."/>
            <person name="Harwood C.R."/>
            <person name="Henaut A."/>
            <person name="Hilbert H."/>
            <person name="Holsappel S."/>
            <person name="Hosono S."/>
            <person name="Hullo M.-F."/>
            <person name="Itaya M."/>
            <person name="Jones L.-M."/>
            <person name="Joris B."/>
            <person name="Karamata D."/>
            <person name="Kasahara Y."/>
            <person name="Klaerr-Blanchard M."/>
            <person name="Klein C."/>
            <person name="Kobayashi Y."/>
            <person name="Koetter P."/>
            <person name="Koningstein G."/>
            <person name="Krogh S."/>
            <person name="Kumano M."/>
            <person name="Kurita K."/>
            <person name="Lapidus A."/>
            <person name="Lardinois S."/>
            <person name="Lauber J."/>
            <person name="Lazarevic V."/>
            <person name="Lee S.-M."/>
            <person name="Levine A."/>
            <person name="Liu H."/>
            <person name="Masuda S."/>
            <person name="Mauel C."/>
            <person name="Medigue C."/>
            <person name="Medina N."/>
            <person name="Mellado R.P."/>
            <person name="Mizuno M."/>
            <person name="Moestl D."/>
            <person name="Nakai S."/>
            <person name="Noback M."/>
            <person name="Noone D."/>
            <person name="O'Reilly M."/>
            <person name="Ogawa K."/>
            <person name="Ogiwara A."/>
            <person name="Oudega B."/>
            <person name="Park S.-H."/>
            <person name="Parro V."/>
            <person name="Pohl T.M."/>
            <person name="Portetelle D."/>
            <person name="Porwollik S."/>
            <person name="Prescott A.M."/>
            <person name="Presecan E."/>
            <person name="Pujic P."/>
            <person name="Purnelle B."/>
            <person name="Rapoport G."/>
            <person name="Rey M."/>
            <person name="Reynolds S."/>
            <person name="Rieger M."/>
            <person name="Rivolta C."/>
            <person name="Rocha E."/>
            <person name="Roche B."/>
            <person name="Rose M."/>
            <person name="Sadaie Y."/>
            <person name="Sato T."/>
            <person name="Scanlan E."/>
            <person name="Schleich S."/>
            <person name="Schroeter R."/>
            <person name="Scoffone F."/>
            <person name="Sekiguchi J."/>
            <person name="Sekowska A."/>
            <person name="Seror S.J."/>
            <person name="Serror P."/>
            <person name="Shin B.-S."/>
            <person name="Soldo B."/>
            <person name="Sorokin A."/>
            <person name="Tacconi E."/>
            <person name="Takagi T."/>
            <person name="Takahashi H."/>
            <person name="Takemaru K."/>
            <person name="Takeuchi M."/>
            <person name="Tamakoshi A."/>
            <person name="Tanaka T."/>
            <person name="Terpstra P."/>
            <person name="Tognoni A."/>
            <person name="Tosato V."/>
            <person name="Uchiyama S."/>
            <person name="Vandenbol M."/>
            <person name="Vannier F."/>
            <person name="Vassarotti A."/>
            <person name="Viari A."/>
            <person name="Wambutt R."/>
            <person name="Wedler E."/>
            <person name="Wedler H."/>
            <person name="Weitzenegger T."/>
            <person name="Winters P."/>
            <person name="Wipat A."/>
            <person name="Yamamoto H."/>
            <person name="Yamane K."/>
            <person name="Yasumoto K."/>
            <person name="Yata K."/>
            <person name="Yoshida K."/>
            <person name="Yoshikawa H.-F."/>
            <person name="Zumstein E."/>
            <person name="Yoshikawa H."/>
            <person name="Danchin A."/>
        </authorList>
    </citation>
    <scope>NUCLEOTIDE SEQUENCE [LARGE SCALE GENOMIC DNA]</scope>
    <source>
        <strain>168</strain>
    </source>
</reference>
<name>YVBI_BACSU</name>